<gene>
    <name type="primary">CHI3L1</name>
</gene>
<name>CH3L1_PONAB</name>
<keyword id="KW-0929">Antimicrobial</keyword>
<keyword id="KW-0053">Apoptosis</keyword>
<keyword id="KW-0963">Cytoplasm</keyword>
<keyword id="KW-1015">Disulfide bond</keyword>
<keyword id="KW-0256">Endoplasmic reticulum</keyword>
<keyword id="KW-0325">Glycoprotein</keyword>
<keyword id="KW-0395">Inflammatory response</keyword>
<keyword id="KW-0430">Lectin</keyword>
<keyword id="KW-1185">Reference proteome</keyword>
<keyword id="KW-0964">Secreted</keyword>
<keyword id="KW-0732">Signal</keyword>
<protein>
    <recommendedName>
        <fullName>Chitinase-3-like protein 1</fullName>
    </recommendedName>
</protein>
<organism>
    <name type="scientific">Pongo abelii</name>
    <name type="common">Sumatran orangutan</name>
    <name type="synonym">Pongo pygmaeus abelii</name>
    <dbReference type="NCBI Taxonomy" id="9601"/>
    <lineage>
        <taxon>Eukaryota</taxon>
        <taxon>Metazoa</taxon>
        <taxon>Chordata</taxon>
        <taxon>Craniata</taxon>
        <taxon>Vertebrata</taxon>
        <taxon>Euteleostomi</taxon>
        <taxon>Mammalia</taxon>
        <taxon>Eutheria</taxon>
        <taxon>Euarchontoglires</taxon>
        <taxon>Primates</taxon>
        <taxon>Haplorrhini</taxon>
        <taxon>Catarrhini</taxon>
        <taxon>Hominidae</taxon>
        <taxon>Pongo</taxon>
    </lineage>
</organism>
<dbReference type="EMBL" id="CR858592">
    <property type="protein sequence ID" value="CAH90814.1"/>
    <property type="molecule type" value="mRNA"/>
</dbReference>
<dbReference type="RefSeq" id="NP_001125463.1">
    <property type="nucleotide sequence ID" value="NM_001131991.1"/>
</dbReference>
<dbReference type="SMR" id="Q5RBP6"/>
<dbReference type="FunCoup" id="Q5RBP6">
    <property type="interactions" value="35"/>
</dbReference>
<dbReference type="STRING" id="9601.ENSPPYP00000000371"/>
<dbReference type="CAZy" id="GH18">
    <property type="family name" value="Glycoside Hydrolase Family 18"/>
</dbReference>
<dbReference type="GlyCosmos" id="Q5RBP6">
    <property type="glycosylation" value="1 site, No reported glycans"/>
</dbReference>
<dbReference type="GeneID" id="100172371"/>
<dbReference type="KEGG" id="pon:100172371"/>
<dbReference type="CTD" id="1116"/>
<dbReference type="eggNOG" id="KOG2806">
    <property type="taxonomic scope" value="Eukaryota"/>
</dbReference>
<dbReference type="InParanoid" id="Q5RBP6"/>
<dbReference type="OrthoDB" id="76388at2759"/>
<dbReference type="Proteomes" id="UP000001595">
    <property type="component" value="Unplaced"/>
</dbReference>
<dbReference type="GO" id="GO:0005737">
    <property type="term" value="C:cytoplasm"/>
    <property type="evidence" value="ECO:0000250"/>
    <property type="project" value="UniProtKB"/>
</dbReference>
<dbReference type="GO" id="GO:0005783">
    <property type="term" value="C:endoplasmic reticulum"/>
    <property type="evidence" value="ECO:0000250"/>
    <property type="project" value="UniProtKB"/>
</dbReference>
<dbReference type="GO" id="GO:0005615">
    <property type="term" value="C:extracellular space"/>
    <property type="evidence" value="ECO:0000250"/>
    <property type="project" value="UniProtKB"/>
</dbReference>
<dbReference type="GO" id="GO:0048471">
    <property type="term" value="C:perinuclear region of cytoplasm"/>
    <property type="evidence" value="ECO:0007669"/>
    <property type="project" value="UniProtKB-SubCell"/>
</dbReference>
<dbReference type="GO" id="GO:0030246">
    <property type="term" value="F:carbohydrate binding"/>
    <property type="evidence" value="ECO:0007669"/>
    <property type="project" value="UniProtKB-KW"/>
</dbReference>
<dbReference type="GO" id="GO:0008061">
    <property type="term" value="F:chitin binding"/>
    <property type="evidence" value="ECO:0000250"/>
    <property type="project" value="UniProtKB"/>
</dbReference>
<dbReference type="GO" id="GO:0007250">
    <property type="term" value="P:activation of NF-kappaB-inducing kinase activity"/>
    <property type="evidence" value="ECO:0000250"/>
    <property type="project" value="UniProtKB"/>
</dbReference>
<dbReference type="GO" id="GO:0006915">
    <property type="term" value="P:apoptotic process"/>
    <property type="evidence" value="ECO:0007669"/>
    <property type="project" value="UniProtKB-KW"/>
</dbReference>
<dbReference type="GO" id="GO:0005975">
    <property type="term" value="P:carbohydrate metabolic process"/>
    <property type="evidence" value="ECO:0007669"/>
    <property type="project" value="InterPro"/>
</dbReference>
<dbReference type="GO" id="GO:0071356">
    <property type="term" value="P:cellular response to tumor necrosis factor"/>
    <property type="evidence" value="ECO:0000250"/>
    <property type="project" value="UniProtKB"/>
</dbReference>
<dbReference type="GO" id="GO:0006032">
    <property type="term" value="P:chitin catabolic process"/>
    <property type="evidence" value="ECO:0007669"/>
    <property type="project" value="TreeGrafter"/>
</dbReference>
<dbReference type="GO" id="GO:0006954">
    <property type="term" value="P:inflammatory response"/>
    <property type="evidence" value="ECO:0000250"/>
    <property type="project" value="UniProtKB"/>
</dbReference>
<dbReference type="GO" id="GO:0030324">
    <property type="term" value="P:lung development"/>
    <property type="evidence" value="ECO:0000250"/>
    <property type="project" value="UniProtKB"/>
</dbReference>
<dbReference type="GO" id="GO:0045766">
    <property type="term" value="P:positive regulation of angiogenesis"/>
    <property type="evidence" value="ECO:0000250"/>
    <property type="project" value="UniProtKB"/>
</dbReference>
<dbReference type="GO" id="GO:0070374">
    <property type="term" value="P:positive regulation of ERK1 and ERK2 cascade"/>
    <property type="evidence" value="ECO:0000250"/>
    <property type="project" value="UniProtKB"/>
</dbReference>
<dbReference type="GO" id="GO:0032757">
    <property type="term" value="P:positive regulation of interleukin-8 production"/>
    <property type="evidence" value="ECO:0000250"/>
    <property type="project" value="UniProtKB"/>
</dbReference>
<dbReference type="GO" id="GO:0010800">
    <property type="term" value="P:positive regulation of peptidyl-threonine phosphorylation"/>
    <property type="evidence" value="ECO:0000250"/>
    <property type="project" value="UniProtKB"/>
</dbReference>
<dbReference type="GO" id="GO:0051897">
    <property type="term" value="P:positive regulation of phosphatidylinositol 3-kinase/protein kinase B signal transduction"/>
    <property type="evidence" value="ECO:0000250"/>
    <property type="project" value="UniProtKB"/>
</dbReference>
<dbReference type="GO" id="GO:0070555">
    <property type="term" value="P:response to interleukin-1"/>
    <property type="evidence" value="ECO:0000250"/>
    <property type="project" value="UniProtKB"/>
</dbReference>
<dbReference type="GO" id="GO:0070741">
    <property type="term" value="P:response to interleukin-6"/>
    <property type="evidence" value="ECO:0000250"/>
    <property type="project" value="UniProtKB"/>
</dbReference>
<dbReference type="GO" id="GO:0009612">
    <property type="term" value="P:response to mechanical stimulus"/>
    <property type="evidence" value="ECO:0000250"/>
    <property type="project" value="UniProtKB"/>
</dbReference>
<dbReference type="GO" id="GO:0034612">
    <property type="term" value="P:response to tumor necrosis factor"/>
    <property type="evidence" value="ECO:0000250"/>
    <property type="project" value="UniProtKB"/>
</dbReference>
<dbReference type="CDD" id="cd02872">
    <property type="entry name" value="GH18_chitolectin_chitotriosidase"/>
    <property type="match status" value="1"/>
</dbReference>
<dbReference type="FunFam" id="3.10.50.10:FF:000001">
    <property type="entry name" value="Chitinase 3-like 1"/>
    <property type="match status" value="1"/>
</dbReference>
<dbReference type="FunFam" id="3.20.20.80:FF:000047">
    <property type="entry name" value="Chitinase-3-like protein 1"/>
    <property type="match status" value="1"/>
</dbReference>
<dbReference type="Gene3D" id="3.10.50.10">
    <property type="match status" value="1"/>
</dbReference>
<dbReference type="Gene3D" id="3.20.20.80">
    <property type="entry name" value="Glycosidases"/>
    <property type="match status" value="1"/>
</dbReference>
<dbReference type="InterPro" id="IPR011583">
    <property type="entry name" value="Chitinase_II/V-like_cat"/>
</dbReference>
<dbReference type="InterPro" id="IPR029070">
    <property type="entry name" value="Chitinase_insertion_sf"/>
</dbReference>
<dbReference type="InterPro" id="IPR001223">
    <property type="entry name" value="Glyco_hydro18_cat"/>
</dbReference>
<dbReference type="InterPro" id="IPR017853">
    <property type="entry name" value="Glycoside_hydrolase_SF"/>
</dbReference>
<dbReference type="InterPro" id="IPR050314">
    <property type="entry name" value="Glycosyl_Hydrlase_18"/>
</dbReference>
<dbReference type="PANTHER" id="PTHR11177">
    <property type="entry name" value="CHITINASE"/>
    <property type="match status" value="1"/>
</dbReference>
<dbReference type="PANTHER" id="PTHR11177:SF202">
    <property type="entry name" value="CHITINASE-3-LIKE PROTEIN 1"/>
    <property type="match status" value="1"/>
</dbReference>
<dbReference type="Pfam" id="PF00704">
    <property type="entry name" value="Glyco_hydro_18"/>
    <property type="match status" value="1"/>
</dbReference>
<dbReference type="SMART" id="SM00636">
    <property type="entry name" value="Glyco_18"/>
    <property type="match status" value="1"/>
</dbReference>
<dbReference type="SUPFAM" id="SSF51445">
    <property type="entry name" value="(Trans)glycosidases"/>
    <property type="match status" value="1"/>
</dbReference>
<dbReference type="SUPFAM" id="SSF54556">
    <property type="entry name" value="Chitinase insertion domain"/>
    <property type="match status" value="1"/>
</dbReference>
<dbReference type="PROSITE" id="PS51910">
    <property type="entry name" value="GH18_2"/>
    <property type="match status" value="1"/>
</dbReference>
<reference key="1">
    <citation type="submission" date="2004-11" db="EMBL/GenBank/DDBJ databases">
        <authorList>
            <consortium name="The German cDNA consortium"/>
        </authorList>
    </citation>
    <scope>NUCLEOTIDE SEQUENCE [LARGE SCALE MRNA]</scope>
    <source>
        <tissue>Liver</tissue>
    </source>
</reference>
<comment type="function">
    <text evidence="1">Carbohydrate-binding lectin with a preference for chitin. Has no chitinase activity. May play a role in tissue remodeling and in the capacity of cells to respond to and cope with changes in their environment. Plays a role in T-helper cell type 2 (Th2) inflammatory response and IL-13-induced inflammation, regulating allergen sensitization, inflammatory cell apoptosis, dendritic cell accumulation and M2 macrophage differentiation. Facilitates invasion of pathogenic enteric bacteria into colonic mucosa and lymphoid organs. Mediates activation of AKT1 signaling pathway and subsequent IL8 production in colonic epithelial cells. Regulates antibacterial responses in lung by contributing to macrophage bacterial killing, controlling bacterial dissemination and augmenting host tolerance. Also regulates hyperoxia-induced injury, inflammation and epithelial apoptosis in lung (By similarity).</text>
</comment>
<comment type="subunit">
    <text evidence="1">Monomer.</text>
</comment>
<comment type="subcellular location">
    <subcellularLocation>
        <location evidence="1">Secreted</location>
        <location evidence="1">Extracellular space</location>
    </subcellularLocation>
    <subcellularLocation>
        <location evidence="1">Cytoplasm</location>
    </subcellularLocation>
    <subcellularLocation>
        <location evidence="1">Cytoplasm</location>
        <location evidence="1">Perinuclear region</location>
    </subcellularLocation>
    <subcellularLocation>
        <location evidence="1">Endoplasmic reticulum</location>
    </subcellularLocation>
</comment>
<comment type="similarity">
    <text evidence="3">Belongs to the glycosyl hydrolase 18 family.</text>
</comment>
<comment type="caution">
    <text evidence="3">Although it belongs to the glycosyl hydrolase 18 family, Leu-167 is present instead of the conserved Glu which is an active site residue. Therefore this protein lacks chitinase activity.</text>
</comment>
<sequence length="410" mass="45561">MGVKAAQTGIWASQGQSIRVVGFQAQTAHRAICLLGFVVLVLLQCCSAYKLVCYYTSWSQYREGDGSCFPDAIDRFLCTHIIYSFANISNDHIDTWEWNDVTLYGMLNTLKNRNPNLKTLLSVGGWNFGSQRFSNIASNTQSRRTFIKSVPPFLRTHGFDGLDLAWLYPGQRDKQHFTTLIKEMRAEFIKEAQPGKKQLLLSAAVSAGKVTIDSSYDIAKISQHLDFISIMTYDFHGAWRGTTGHHSPLFRGQEDASPDRFSNTDYAVGYMLRLEAPASKLVMGIPTFGRSFTLASSETGVGAPISGPGIPGRFTKEAGTLAYYEICDFLRGATVHRILGQQVPYATKGNQWVGYDDQESVKSKVQYLKERQLAGAMVWALDLDDFQGSFCGQDLRFPLTNAIKDALAAT</sequence>
<feature type="signal peptide" evidence="1">
    <location>
        <begin position="1"/>
        <end position="48"/>
    </location>
</feature>
<feature type="chain" id="PRO_0000042788" description="Chitinase-3-like protein 1">
    <location>
        <begin position="49"/>
        <end position="410"/>
    </location>
</feature>
<feature type="domain" description="GH18" evidence="2">
    <location>
        <begin position="49"/>
        <end position="410"/>
    </location>
</feature>
<feature type="region of interest" description="Important for AKT1 activation and IL8 production" evidence="1">
    <location>
        <begin position="351"/>
        <end position="365"/>
    </location>
</feature>
<feature type="binding site" evidence="2">
    <location>
        <begin position="97"/>
        <end position="98"/>
    </location>
    <ligand>
        <name>chitin</name>
        <dbReference type="ChEBI" id="CHEBI:17029"/>
    </ligand>
</feature>
<feature type="binding site" evidence="2">
    <location>
        <begin position="124"/>
        <end position="127"/>
    </location>
    <ligand>
        <name>chitin</name>
        <dbReference type="ChEBI" id="CHEBI:17029"/>
    </ligand>
</feature>
<feature type="binding site" evidence="2">
    <location>
        <position position="168"/>
    </location>
    <ligand>
        <name>chitin</name>
        <dbReference type="ChEBI" id="CHEBI:17029"/>
    </ligand>
</feature>
<feature type="binding site" evidence="2">
    <location>
        <begin position="231"/>
        <end position="234"/>
    </location>
    <ligand>
        <name>chitin</name>
        <dbReference type="ChEBI" id="CHEBI:17029"/>
    </ligand>
</feature>
<feature type="binding site" evidence="1">
    <location>
        <position position="290"/>
    </location>
    <ligand>
        <name>chitin</name>
        <dbReference type="ChEBI" id="CHEBI:17029"/>
    </ligand>
</feature>
<feature type="binding site" evidence="2">
    <location>
        <position position="379"/>
    </location>
    <ligand>
        <name>chitin</name>
        <dbReference type="ChEBI" id="CHEBI:17029"/>
    </ligand>
</feature>
<feature type="glycosylation site" description="N-linked (GlcNAc...) asparagine" evidence="1">
    <location>
        <position position="87"/>
    </location>
</feature>
<feature type="disulfide bond" evidence="2">
    <location>
        <begin position="53"/>
        <end position="78"/>
    </location>
</feature>
<feature type="disulfide bond" evidence="1">
    <location>
        <begin position="327"/>
        <end position="391"/>
    </location>
</feature>
<proteinExistence type="evidence at transcript level"/>
<evidence type="ECO:0000250" key="1"/>
<evidence type="ECO:0000255" key="2">
    <source>
        <dbReference type="PROSITE-ProRule" id="PRU01258"/>
    </source>
</evidence>
<evidence type="ECO:0000305" key="3"/>
<accession>Q5RBP6</accession>